<proteinExistence type="inferred from homology"/>
<keyword id="KW-0227">DNA damage</keyword>
<keyword id="KW-0234">DNA repair</keyword>
<keyword id="KW-0235">DNA replication</keyword>
<keyword id="KW-0436">Ligase</keyword>
<keyword id="KW-0460">Magnesium</keyword>
<keyword id="KW-0464">Manganese</keyword>
<keyword id="KW-0479">Metal-binding</keyword>
<keyword id="KW-0520">NAD</keyword>
<keyword id="KW-1185">Reference proteome</keyword>
<keyword id="KW-0862">Zinc</keyword>
<sequence length="668" mass="73610">MSIEQTLDELKQQLNYHAYRYYVEDSPELPDAEYDRMMQQLLSIESEHPELVTVDSPSQRVGGEALDGFTQIQHEIPMLSLDNAFSDEELEAFEKRMNDRLISKPVSLFCCEPKLDGLAVSLLYVDGKLVQAGTRGDGTTGENITENVRTIRCIPLTLQGEGWPTRLEVRGEVFMPKAGFEALNERALKRGEKPFANPRNAAAGSLRQLDSKITATRPLSFYAYSVGVIEGGELETSHYQRFVQLKSWGLPMCEETKQCHSLTEVKAYYKDILERRDALKYEIDGVVIKVDDIALQEQLGFVARAPRWAIAYKFPAQEELTVLNDVEFQVGRTGAITPVAKLEPVFVGGVTVSNATLHNADEIARLGVHIGDTVIIRRAGDVIPQIVSVVEARRPTDSKAIVYPIHCPVCGSNLERVEGEAVTRCGAGLVCQAQRKEALKHFVSRKALDVDGLGDKVVEQLVDKEMVETPADLFKLSAGLLTVLERMGPKSAQNVVDALNKAKATTLPRFLYSLGIREVGEATAANLAAHFYTLEAIQVATFEQLIEVSDVGDIVAKHVLNFFAEPHNKTVIEDLQEMGIHWPEIKALDESVPQPLAGKVVVLTGTLHKLKRNEAKAALQELGAKVTGSVSKKTDILFAGEAAGSKLAKAEELGVEVMNEEQLIELLN</sequence>
<organism>
    <name type="scientific">Aliivibrio fischeri (strain ATCC 700601 / ES114)</name>
    <name type="common">Vibrio fischeri</name>
    <dbReference type="NCBI Taxonomy" id="312309"/>
    <lineage>
        <taxon>Bacteria</taxon>
        <taxon>Pseudomonadati</taxon>
        <taxon>Pseudomonadota</taxon>
        <taxon>Gammaproteobacteria</taxon>
        <taxon>Vibrionales</taxon>
        <taxon>Vibrionaceae</taxon>
        <taxon>Aliivibrio</taxon>
    </lineage>
</organism>
<feature type="chain" id="PRO_0000313505" description="DNA ligase">
    <location>
        <begin position="1"/>
        <end position="668"/>
    </location>
</feature>
<feature type="domain" description="BRCT" evidence="1">
    <location>
        <begin position="591"/>
        <end position="668"/>
    </location>
</feature>
<feature type="active site" description="N6-AMP-lysine intermediate" evidence="1">
    <location>
        <position position="114"/>
    </location>
</feature>
<feature type="binding site" evidence="1">
    <location>
        <begin position="31"/>
        <end position="35"/>
    </location>
    <ligand>
        <name>NAD(+)</name>
        <dbReference type="ChEBI" id="CHEBI:57540"/>
    </ligand>
</feature>
<feature type="binding site" evidence="1">
    <location>
        <begin position="80"/>
        <end position="81"/>
    </location>
    <ligand>
        <name>NAD(+)</name>
        <dbReference type="ChEBI" id="CHEBI:57540"/>
    </ligand>
</feature>
<feature type="binding site" evidence="1">
    <location>
        <position position="112"/>
    </location>
    <ligand>
        <name>NAD(+)</name>
        <dbReference type="ChEBI" id="CHEBI:57540"/>
    </ligand>
</feature>
<feature type="binding site" evidence="1">
    <location>
        <position position="135"/>
    </location>
    <ligand>
        <name>NAD(+)</name>
        <dbReference type="ChEBI" id="CHEBI:57540"/>
    </ligand>
</feature>
<feature type="binding site" evidence="1">
    <location>
        <position position="172"/>
    </location>
    <ligand>
        <name>NAD(+)</name>
        <dbReference type="ChEBI" id="CHEBI:57540"/>
    </ligand>
</feature>
<feature type="binding site" evidence="1">
    <location>
        <position position="289"/>
    </location>
    <ligand>
        <name>NAD(+)</name>
        <dbReference type="ChEBI" id="CHEBI:57540"/>
    </ligand>
</feature>
<feature type="binding site" evidence="1">
    <location>
        <position position="313"/>
    </location>
    <ligand>
        <name>NAD(+)</name>
        <dbReference type="ChEBI" id="CHEBI:57540"/>
    </ligand>
</feature>
<feature type="binding site" evidence="1">
    <location>
        <position position="407"/>
    </location>
    <ligand>
        <name>Zn(2+)</name>
        <dbReference type="ChEBI" id="CHEBI:29105"/>
    </ligand>
</feature>
<feature type="binding site" evidence="1">
    <location>
        <position position="410"/>
    </location>
    <ligand>
        <name>Zn(2+)</name>
        <dbReference type="ChEBI" id="CHEBI:29105"/>
    </ligand>
</feature>
<feature type="binding site" evidence="1">
    <location>
        <position position="425"/>
    </location>
    <ligand>
        <name>Zn(2+)</name>
        <dbReference type="ChEBI" id="CHEBI:29105"/>
    </ligand>
</feature>
<feature type="binding site" evidence="1">
    <location>
        <position position="431"/>
    </location>
    <ligand>
        <name>Zn(2+)</name>
        <dbReference type="ChEBI" id="CHEBI:29105"/>
    </ligand>
</feature>
<protein>
    <recommendedName>
        <fullName evidence="1">DNA ligase</fullName>
        <ecNumber evidence="1">6.5.1.2</ecNumber>
    </recommendedName>
    <alternativeName>
        <fullName evidence="1">Polydeoxyribonucleotide synthase [NAD(+)]</fullName>
    </alternativeName>
</protein>
<accession>Q5E3L1</accession>
<dbReference type="EC" id="6.5.1.2" evidence="1"/>
<dbReference type="EMBL" id="CP000020">
    <property type="protein sequence ID" value="AAW86385.1"/>
    <property type="molecule type" value="Genomic_DNA"/>
</dbReference>
<dbReference type="RefSeq" id="WP_011262383.1">
    <property type="nucleotide sequence ID" value="NC_006840.2"/>
</dbReference>
<dbReference type="RefSeq" id="YP_205273.1">
    <property type="nucleotide sequence ID" value="NC_006840.2"/>
</dbReference>
<dbReference type="SMR" id="Q5E3L1"/>
<dbReference type="STRING" id="312309.VF_1890"/>
<dbReference type="EnsemblBacteria" id="AAW86385">
    <property type="protein sequence ID" value="AAW86385"/>
    <property type="gene ID" value="VF_1890"/>
</dbReference>
<dbReference type="GeneID" id="54164588"/>
<dbReference type="KEGG" id="vfi:VF_1890"/>
<dbReference type="PATRIC" id="fig|312309.11.peg.1918"/>
<dbReference type="eggNOG" id="COG0272">
    <property type="taxonomic scope" value="Bacteria"/>
</dbReference>
<dbReference type="HOGENOM" id="CLU_007764_2_1_6"/>
<dbReference type="OrthoDB" id="9759736at2"/>
<dbReference type="Proteomes" id="UP000000537">
    <property type="component" value="Chromosome I"/>
</dbReference>
<dbReference type="GO" id="GO:0005829">
    <property type="term" value="C:cytosol"/>
    <property type="evidence" value="ECO:0007669"/>
    <property type="project" value="TreeGrafter"/>
</dbReference>
<dbReference type="GO" id="GO:0003677">
    <property type="term" value="F:DNA binding"/>
    <property type="evidence" value="ECO:0007669"/>
    <property type="project" value="InterPro"/>
</dbReference>
<dbReference type="GO" id="GO:0003911">
    <property type="term" value="F:DNA ligase (NAD+) activity"/>
    <property type="evidence" value="ECO:0007669"/>
    <property type="project" value="UniProtKB-UniRule"/>
</dbReference>
<dbReference type="GO" id="GO:0046872">
    <property type="term" value="F:metal ion binding"/>
    <property type="evidence" value="ECO:0007669"/>
    <property type="project" value="UniProtKB-KW"/>
</dbReference>
<dbReference type="GO" id="GO:0006281">
    <property type="term" value="P:DNA repair"/>
    <property type="evidence" value="ECO:0007669"/>
    <property type="project" value="UniProtKB-KW"/>
</dbReference>
<dbReference type="GO" id="GO:0006260">
    <property type="term" value="P:DNA replication"/>
    <property type="evidence" value="ECO:0007669"/>
    <property type="project" value="UniProtKB-KW"/>
</dbReference>
<dbReference type="CDD" id="cd17748">
    <property type="entry name" value="BRCT_DNA_ligase_like"/>
    <property type="match status" value="1"/>
</dbReference>
<dbReference type="CDD" id="cd00114">
    <property type="entry name" value="LIGANc"/>
    <property type="match status" value="1"/>
</dbReference>
<dbReference type="FunFam" id="1.10.150.20:FF:000006">
    <property type="entry name" value="DNA ligase"/>
    <property type="match status" value="1"/>
</dbReference>
<dbReference type="FunFam" id="1.10.150.20:FF:000007">
    <property type="entry name" value="DNA ligase"/>
    <property type="match status" value="1"/>
</dbReference>
<dbReference type="FunFam" id="1.10.287.610:FF:000002">
    <property type="entry name" value="DNA ligase"/>
    <property type="match status" value="1"/>
</dbReference>
<dbReference type="FunFam" id="2.40.50.140:FF:000012">
    <property type="entry name" value="DNA ligase"/>
    <property type="match status" value="1"/>
</dbReference>
<dbReference type="FunFam" id="3.30.470.30:FF:000001">
    <property type="entry name" value="DNA ligase"/>
    <property type="match status" value="1"/>
</dbReference>
<dbReference type="Gene3D" id="6.20.10.30">
    <property type="match status" value="1"/>
</dbReference>
<dbReference type="Gene3D" id="1.10.150.20">
    <property type="entry name" value="5' to 3' exonuclease, C-terminal subdomain"/>
    <property type="match status" value="2"/>
</dbReference>
<dbReference type="Gene3D" id="3.40.50.10190">
    <property type="entry name" value="BRCT domain"/>
    <property type="match status" value="1"/>
</dbReference>
<dbReference type="Gene3D" id="3.30.470.30">
    <property type="entry name" value="DNA ligase/mRNA capping enzyme"/>
    <property type="match status" value="1"/>
</dbReference>
<dbReference type="Gene3D" id="1.10.287.610">
    <property type="entry name" value="Helix hairpin bin"/>
    <property type="match status" value="1"/>
</dbReference>
<dbReference type="Gene3D" id="2.40.50.140">
    <property type="entry name" value="Nucleic acid-binding proteins"/>
    <property type="match status" value="1"/>
</dbReference>
<dbReference type="HAMAP" id="MF_01588">
    <property type="entry name" value="DNA_ligase_A"/>
    <property type="match status" value="1"/>
</dbReference>
<dbReference type="InterPro" id="IPR001357">
    <property type="entry name" value="BRCT_dom"/>
</dbReference>
<dbReference type="InterPro" id="IPR036420">
    <property type="entry name" value="BRCT_dom_sf"/>
</dbReference>
<dbReference type="InterPro" id="IPR041663">
    <property type="entry name" value="DisA/LigA_HHH"/>
</dbReference>
<dbReference type="InterPro" id="IPR001679">
    <property type="entry name" value="DNA_ligase"/>
</dbReference>
<dbReference type="InterPro" id="IPR018239">
    <property type="entry name" value="DNA_ligase_AS"/>
</dbReference>
<dbReference type="InterPro" id="IPR033136">
    <property type="entry name" value="DNA_ligase_CS"/>
</dbReference>
<dbReference type="InterPro" id="IPR013839">
    <property type="entry name" value="DNAligase_adenylation"/>
</dbReference>
<dbReference type="InterPro" id="IPR013840">
    <property type="entry name" value="DNAligase_N"/>
</dbReference>
<dbReference type="InterPro" id="IPR003583">
    <property type="entry name" value="Hlx-hairpin-Hlx_DNA-bd_motif"/>
</dbReference>
<dbReference type="InterPro" id="IPR012340">
    <property type="entry name" value="NA-bd_OB-fold"/>
</dbReference>
<dbReference type="InterPro" id="IPR004150">
    <property type="entry name" value="NAD_DNA_ligase_OB"/>
</dbReference>
<dbReference type="InterPro" id="IPR010994">
    <property type="entry name" value="RuvA_2-like"/>
</dbReference>
<dbReference type="InterPro" id="IPR004149">
    <property type="entry name" value="Znf_DNAligase_C4"/>
</dbReference>
<dbReference type="NCBIfam" id="TIGR00575">
    <property type="entry name" value="dnlj"/>
    <property type="match status" value="1"/>
</dbReference>
<dbReference type="NCBIfam" id="NF005932">
    <property type="entry name" value="PRK07956.1"/>
    <property type="match status" value="1"/>
</dbReference>
<dbReference type="PANTHER" id="PTHR23389">
    <property type="entry name" value="CHROMOSOME TRANSMISSION FIDELITY FACTOR 18"/>
    <property type="match status" value="1"/>
</dbReference>
<dbReference type="PANTHER" id="PTHR23389:SF9">
    <property type="entry name" value="DNA LIGASE"/>
    <property type="match status" value="1"/>
</dbReference>
<dbReference type="Pfam" id="PF00533">
    <property type="entry name" value="BRCT"/>
    <property type="match status" value="1"/>
</dbReference>
<dbReference type="Pfam" id="PF01653">
    <property type="entry name" value="DNA_ligase_aden"/>
    <property type="match status" value="1"/>
</dbReference>
<dbReference type="Pfam" id="PF03120">
    <property type="entry name" value="DNA_ligase_OB"/>
    <property type="match status" value="1"/>
</dbReference>
<dbReference type="Pfam" id="PF03119">
    <property type="entry name" value="DNA_ligase_ZBD"/>
    <property type="match status" value="1"/>
</dbReference>
<dbReference type="Pfam" id="PF12826">
    <property type="entry name" value="HHH_2"/>
    <property type="match status" value="1"/>
</dbReference>
<dbReference type="Pfam" id="PF14520">
    <property type="entry name" value="HHH_5"/>
    <property type="match status" value="1"/>
</dbReference>
<dbReference type="Pfam" id="PF22745">
    <property type="entry name" value="Nlig-Ia"/>
    <property type="match status" value="1"/>
</dbReference>
<dbReference type="PIRSF" id="PIRSF001604">
    <property type="entry name" value="LigA"/>
    <property type="match status" value="1"/>
</dbReference>
<dbReference type="SMART" id="SM00292">
    <property type="entry name" value="BRCT"/>
    <property type="match status" value="1"/>
</dbReference>
<dbReference type="SMART" id="SM00278">
    <property type="entry name" value="HhH1"/>
    <property type="match status" value="4"/>
</dbReference>
<dbReference type="SMART" id="SM00532">
    <property type="entry name" value="LIGANc"/>
    <property type="match status" value="1"/>
</dbReference>
<dbReference type="SUPFAM" id="SSF52113">
    <property type="entry name" value="BRCT domain"/>
    <property type="match status" value="1"/>
</dbReference>
<dbReference type="SUPFAM" id="SSF56091">
    <property type="entry name" value="DNA ligase/mRNA capping enzyme, catalytic domain"/>
    <property type="match status" value="1"/>
</dbReference>
<dbReference type="SUPFAM" id="SSF50249">
    <property type="entry name" value="Nucleic acid-binding proteins"/>
    <property type="match status" value="1"/>
</dbReference>
<dbReference type="SUPFAM" id="SSF47781">
    <property type="entry name" value="RuvA domain 2-like"/>
    <property type="match status" value="1"/>
</dbReference>
<dbReference type="PROSITE" id="PS50172">
    <property type="entry name" value="BRCT"/>
    <property type="match status" value="1"/>
</dbReference>
<dbReference type="PROSITE" id="PS01055">
    <property type="entry name" value="DNA_LIGASE_N1"/>
    <property type="match status" value="1"/>
</dbReference>
<dbReference type="PROSITE" id="PS01056">
    <property type="entry name" value="DNA_LIGASE_N2"/>
    <property type="match status" value="1"/>
</dbReference>
<gene>
    <name evidence="1" type="primary">ligA</name>
    <name type="ordered locus">VF_1890</name>
</gene>
<name>DNLJ_ALIF1</name>
<reference key="1">
    <citation type="journal article" date="2005" name="Proc. Natl. Acad. Sci. U.S.A.">
        <title>Complete genome sequence of Vibrio fischeri: a symbiotic bacterium with pathogenic congeners.</title>
        <authorList>
            <person name="Ruby E.G."/>
            <person name="Urbanowski M."/>
            <person name="Campbell J."/>
            <person name="Dunn A."/>
            <person name="Faini M."/>
            <person name="Gunsalus R."/>
            <person name="Lostroh P."/>
            <person name="Lupp C."/>
            <person name="McCann J."/>
            <person name="Millikan D."/>
            <person name="Schaefer A."/>
            <person name="Stabb E."/>
            <person name="Stevens A."/>
            <person name="Visick K."/>
            <person name="Whistler C."/>
            <person name="Greenberg E.P."/>
        </authorList>
    </citation>
    <scope>NUCLEOTIDE SEQUENCE [LARGE SCALE GENOMIC DNA]</scope>
    <source>
        <strain>ATCC 700601 / ES114</strain>
    </source>
</reference>
<evidence type="ECO:0000255" key="1">
    <source>
        <dbReference type="HAMAP-Rule" id="MF_01588"/>
    </source>
</evidence>
<comment type="function">
    <text evidence="1">DNA ligase that catalyzes the formation of phosphodiester linkages between 5'-phosphoryl and 3'-hydroxyl groups in double-stranded DNA using NAD as a coenzyme and as the energy source for the reaction. It is essential for DNA replication and repair of damaged DNA.</text>
</comment>
<comment type="catalytic activity">
    <reaction evidence="1">
        <text>NAD(+) + (deoxyribonucleotide)n-3'-hydroxyl + 5'-phospho-(deoxyribonucleotide)m = (deoxyribonucleotide)n+m + AMP + beta-nicotinamide D-nucleotide.</text>
        <dbReference type="EC" id="6.5.1.2"/>
    </reaction>
</comment>
<comment type="cofactor">
    <cofactor evidence="1">
        <name>Mg(2+)</name>
        <dbReference type="ChEBI" id="CHEBI:18420"/>
    </cofactor>
    <cofactor evidence="1">
        <name>Mn(2+)</name>
        <dbReference type="ChEBI" id="CHEBI:29035"/>
    </cofactor>
</comment>
<comment type="similarity">
    <text evidence="1">Belongs to the NAD-dependent DNA ligase family. LigA subfamily.</text>
</comment>